<protein>
    <recommendedName>
        <fullName evidence="1">Aspartate carbamoyltransferase regulatory chain</fullName>
    </recommendedName>
</protein>
<comment type="function">
    <text evidence="1">Involved in allosteric regulation of aspartate carbamoyltransferase.</text>
</comment>
<comment type="cofactor">
    <cofactor evidence="1">
        <name>Zn(2+)</name>
        <dbReference type="ChEBI" id="CHEBI:29105"/>
    </cofactor>
    <text evidence="1">Binds 1 zinc ion per subunit.</text>
</comment>
<comment type="subunit">
    <text evidence="1">Contains catalytic and regulatory chains.</text>
</comment>
<comment type="similarity">
    <text evidence="1">Belongs to the PyrI family.</text>
</comment>
<name>PYRI_METHJ</name>
<keyword id="KW-0479">Metal-binding</keyword>
<keyword id="KW-0665">Pyrimidine biosynthesis</keyword>
<keyword id="KW-1185">Reference proteome</keyword>
<keyword id="KW-0862">Zinc</keyword>
<proteinExistence type="inferred from homology"/>
<dbReference type="EMBL" id="CP000254">
    <property type="protein sequence ID" value="ABD40375.1"/>
    <property type="molecule type" value="Genomic_DNA"/>
</dbReference>
<dbReference type="RefSeq" id="WP_011447660.1">
    <property type="nucleotide sequence ID" value="NC_007796.1"/>
</dbReference>
<dbReference type="SMR" id="Q2FN10"/>
<dbReference type="FunCoup" id="Q2FN10">
    <property type="interactions" value="90"/>
</dbReference>
<dbReference type="STRING" id="323259.Mhun_0619"/>
<dbReference type="EnsemblBacteria" id="ABD40375">
    <property type="protein sequence ID" value="ABD40375"/>
    <property type="gene ID" value="Mhun_0619"/>
</dbReference>
<dbReference type="GeneID" id="3922566"/>
<dbReference type="KEGG" id="mhu:Mhun_0619"/>
<dbReference type="eggNOG" id="arCOG04229">
    <property type="taxonomic scope" value="Archaea"/>
</dbReference>
<dbReference type="HOGENOM" id="CLU_128576_0_0_2"/>
<dbReference type="InParanoid" id="Q2FN10"/>
<dbReference type="OrthoDB" id="7000at2157"/>
<dbReference type="Proteomes" id="UP000001941">
    <property type="component" value="Chromosome"/>
</dbReference>
<dbReference type="GO" id="GO:0009347">
    <property type="term" value="C:aspartate carbamoyltransferase complex"/>
    <property type="evidence" value="ECO:0007669"/>
    <property type="project" value="InterPro"/>
</dbReference>
<dbReference type="GO" id="GO:0046872">
    <property type="term" value="F:metal ion binding"/>
    <property type="evidence" value="ECO:0007669"/>
    <property type="project" value="UniProtKB-KW"/>
</dbReference>
<dbReference type="GO" id="GO:0006207">
    <property type="term" value="P:'de novo' pyrimidine nucleobase biosynthetic process"/>
    <property type="evidence" value="ECO:0007669"/>
    <property type="project" value="InterPro"/>
</dbReference>
<dbReference type="GO" id="GO:0006221">
    <property type="term" value="P:pyrimidine nucleotide biosynthetic process"/>
    <property type="evidence" value="ECO:0007669"/>
    <property type="project" value="UniProtKB-UniRule"/>
</dbReference>
<dbReference type="Gene3D" id="2.30.30.20">
    <property type="entry name" value="Aspartate carbamoyltransferase regulatory subunit, C-terminal domain"/>
    <property type="match status" value="1"/>
</dbReference>
<dbReference type="Gene3D" id="3.30.70.140">
    <property type="entry name" value="Aspartate carbamoyltransferase regulatory subunit, N-terminal domain"/>
    <property type="match status" value="1"/>
</dbReference>
<dbReference type="HAMAP" id="MF_00002">
    <property type="entry name" value="Asp_carb_tr_reg"/>
    <property type="match status" value="1"/>
</dbReference>
<dbReference type="InterPro" id="IPR020545">
    <property type="entry name" value="Asp_carbamoyltransf_reg_N"/>
</dbReference>
<dbReference type="InterPro" id="IPR002801">
    <property type="entry name" value="Asp_carbamoylTrfase_reg"/>
</dbReference>
<dbReference type="InterPro" id="IPR020542">
    <property type="entry name" value="Asp_carbamoyltrfase_reg_C"/>
</dbReference>
<dbReference type="InterPro" id="IPR036792">
    <property type="entry name" value="Asp_carbatrfase_reg_C_sf"/>
</dbReference>
<dbReference type="InterPro" id="IPR036793">
    <property type="entry name" value="Asp_carbatrfase_reg_N_sf"/>
</dbReference>
<dbReference type="NCBIfam" id="TIGR00240">
    <property type="entry name" value="ATCase_reg"/>
    <property type="match status" value="1"/>
</dbReference>
<dbReference type="PANTHER" id="PTHR35805">
    <property type="entry name" value="ASPARTATE CARBAMOYLTRANSFERASE REGULATORY CHAIN"/>
    <property type="match status" value="1"/>
</dbReference>
<dbReference type="PANTHER" id="PTHR35805:SF1">
    <property type="entry name" value="ASPARTATE CARBAMOYLTRANSFERASE REGULATORY CHAIN"/>
    <property type="match status" value="1"/>
</dbReference>
<dbReference type="Pfam" id="PF01948">
    <property type="entry name" value="PyrI"/>
    <property type="match status" value="1"/>
</dbReference>
<dbReference type="Pfam" id="PF02748">
    <property type="entry name" value="PyrI_C"/>
    <property type="match status" value="1"/>
</dbReference>
<dbReference type="SUPFAM" id="SSF57825">
    <property type="entry name" value="Aspartate carbamoyltransferase, Regulatory-chain, C-terminal domain"/>
    <property type="match status" value="1"/>
</dbReference>
<dbReference type="SUPFAM" id="SSF54893">
    <property type="entry name" value="Aspartate carbamoyltransferase, Regulatory-chain, N-terminal domain"/>
    <property type="match status" value="1"/>
</dbReference>
<sequence length="155" mass="16965">MTNEEPKRTLVISTIENGTVIDHIKAGEALTVLRILGITGSTRECVSVATNVSSKAQEKKDVVKIEKRELKAQEVDRIALVAPNATINIIRNFRVIEKKGVIIPPVLIGVLRCPNPCCITNTNEPVMSRFEMHGKKAVCSYCDAVISSDISSHII</sequence>
<organism>
    <name type="scientific">Methanospirillum hungatei JF-1 (strain ATCC 27890 / DSM 864 / NBRC 100397 / JF-1)</name>
    <dbReference type="NCBI Taxonomy" id="323259"/>
    <lineage>
        <taxon>Archaea</taxon>
        <taxon>Methanobacteriati</taxon>
        <taxon>Methanobacteriota</taxon>
        <taxon>Stenosarchaea group</taxon>
        <taxon>Methanomicrobia</taxon>
        <taxon>Methanomicrobiales</taxon>
        <taxon>Methanospirillaceae</taxon>
        <taxon>Methanospirillum</taxon>
    </lineage>
</organism>
<gene>
    <name evidence="1" type="primary">pyrI</name>
    <name type="ordered locus">Mhun_0619</name>
</gene>
<feature type="chain" id="PRO_0000321507" description="Aspartate carbamoyltransferase regulatory chain">
    <location>
        <begin position="1"/>
        <end position="155"/>
    </location>
</feature>
<feature type="binding site" evidence="1">
    <location>
        <position position="113"/>
    </location>
    <ligand>
        <name>Zn(2+)</name>
        <dbReference type="ChEBI" id="CHEBI:29105"/>
    </ligand>
</feature>
<feature type="binding site" evidence="1">
    <location>
        <position position="118"/>
    </location>
    <ligand>
        <name>Zn(2+)</name>
        <dbReference type="ChEBI" id="CHEBI:29105"/>
    </ligand>
</feature>
<feature type="binding site" evidence="1">
    <location>
        <position position="139"/>
    </location>
    <ligand>
        <name>Zn(2+)</name>
        <dbReference type="ChEBI" id="CHEBI:29105"/>
    </ligand>
</feature>
<feature type="binding site" evidence="1">
    <location>
        <position position="142"/>
    </location>
    <ligand>
        <name>Zn(2+)</name>
        <dbReference type="ChEBI" id="CHEBI:29105"/>
    </ligand>
</feature>
<accession>Q2FN10</accession>
<reference key="1">
    <citation type="journal article" date="2016" name="Stand. Genomic Sci.">
        <title>Complete genome sequence of Methanospirillum hungatei type strain JF1.</title>
        <authorList>
            <person name="Gunsalus R.P."/>
            <person name="Cook L.E."/>
            <person name="Crable B."/>
            <person name="Rohlin L."/>
            <person name="McDonald E."/>
            <person name="Mouttaki H."/>
            <person name="Sieber J.R."/>
            <person name="Poweleit N."/>
            <person name="Zhou H."/>
            <person name="Lapidus A.L."/>
            <person name="Daligault H.E."/>
            <person name="Land M."/>
            <person name="Gilna P."/>
            <person name="Ivanova N."/>
            <person name="Kyrpides N."/>
            <person name="Culley D.E."/>
            <person name="McInerney M.J."/>
        </authorList>
    </citation>
    <scope>NUCLEOTIDE SEQUENCE [LARGE SCALE GENOMIC DNA]</scope>
    <source>
        <strain>ATCC 27890 / DSM 864 / NBRC 100397 / JF-1</strain>
    </source>
</reference>
<evidence type="ECO:0000255" key="1">
    <source>
        <dbReference type="HAMAP-Rule" id="MF_00002"/>
    </source>
</evidence>